<organism>
    <name type="scientific">Staphylococcus aureus (strain COL)</name>
    <dbReference type="NCBI Taxonomy" id="93062"/>
    <lineage>
        <taxon>Bacteria</taxon>
        <taxon>Bacillati</taxon>
        <taxon>Bacillota</taxon>
        <taxon>Bacilli</taxon>
        <taxon>Bacillales</taxon>
        <taxon>Staphylococcaceae</taxon>
        <taxon>Staphylococcus</taxon>
    </lineage>
</organism>
<protein>
    <recommendedName>
        <fullName>Extracellular matrix protein-binding protein emp</fullName>
    </recommendedName>
</protein>
<name>EMP_STAAC</name>
<accession>Q5HHM6</accession>
<feature type="signal peptide" evidence="1">
    <location>
        <begin position="1"/>
        <end position="26"/>
    </location>
</feature>
<feature type="chain" id="PRO_0000271536" description="Extracellular matrix protein-binding protein emp">
    <location>
        <begin position="27"/>
        <end position="340"/>
    </location>
</feature>
<evidence type="ECO:0000250" key="1"/>
<keyword id="KW-0732">Signal</keyword>
<gene>
    <name type="primary">emp</name>
    <name type="ordered locus">SACOL0858</name>
</gene>
<dbReference type="EMBL" id="CP000046">
    <property type="protein sequence ID" value="AAW36413.1"/>
    <property type="molecule type" value="Genomic_DNA"/>
</dbReference>
<dbReference type="RefSeq" id="WP_000728056.1">
    <property type="nucleotide sequence ID" value="NZ_JBGOFO010000005.1"/>
</dbReference>
<dbReference type="KEGG" id="sac:SACOL0858"/>
<dbReference type="HOGENOM" id="CLU_078520_0_0_9"/>
<dbReference type="Proteomes" id="UP000000530">
    <property type="component" value="Chromosome"/>
</dbReference>
<dbReference type="GO" id="GO:0009986">
    <property type="term" value="C:cell surface"/>
    <property type="evidence" value="ECO:0007669"/>
    <property type="project" value="UniProtKB-SubCell"/>
</dbReference>
<reference key="1">
    <citation type="journal article" date="2005" name="J. Bacteriol.">
        <title>Insights on evolution of virulence and resistance from the complete genome analysis of an early methicillin-resistant Staphylococcus aureus strain and a biofilm-producing methicillin-resistant Staphylococcus epidermidis strain.</title>
        <authorList>
            <person name="Gill S.R."/>
            <person name="Fouts D.E."/>
            <person name="Archer G.L."/>
            <person name="Mongodin E.F."/>
            <person name="DeBoy R.T."/>
            <person name="Ravel J."/>
            <person name="Paulsen I.T."/>
            <person name="Kolonay J.F."/>
            <person name="Brinkac L.M."/>
            <person name="Beanan M.J."/>
            <person name="Dodson R.J."/>
            <person name="Daugherty S.C."/>
            <person name="Madupu R."/>
            <person name="Angiuoli S.V."/>
            <person name="Durkin A.S."/>
            <person name="Haft D.H."/>
            <person name="Vamathevan J.J."/>
            <person name="Khouri H."/>
            <person name="Utterback T.R."/>
            <person name="Lee C."/>
            <person name="Dimitrov G."/>
            <person name="Jiang L."/>
            <person name="Qin H."/>
            <person name="Weidman J."/>
            <person name="Tran K."/>
            <person name="Kang K.H."/>
            <person name="Hance I.R."/>
            <person name="Nelson K.E."/>
            <person name="Fraser C.M."/>
        </authorList>
    </citation>
    <scope>NUCLEOTIDE SEQUENCE [LARGE SCALE GENOMIC DNA]</scope>
    <source>
        <strain>COL</strain>
    </source>
</reference>
<sequence>MKKKLLVLTMSTLFATQIMNSNHAKASVTESVDKKFVVPESGINKIIPAYDEFKNSPKVNVSNLTDNKNFVASEDKLNKIADSSAASKIVDKNFVVPESKLGNIVPEYKEINNRVNVATNNPASQQVDKHFVAKGPEVNRFITQNKVNHHFITTQTHYKKVITSYKSTHVHKHVNHAKDSINKHFIVKPSESPRYTHPSQSLIIKHHFAVPGYHAHKFVTPGHASIKINHFCVVPQINSFKVIPPYGHNSHRMHVPSFQNNTTATHQNAKVNKAYDYKYFYSYKVVKGVKKYFSFSQSNGYKIGKPSLNIKNVNYQYAVPSYSPTHYVPEFKGSLPAPRV</sequence>
<proteinExistence type="inferred from homology"/>
<comment type="function">
    <text evidence="1">Adhesin that binds to the host cell extracellular matrix proteins fibronectin, fibrinogen, collagen, and vitronectin.</text>
</comment>
<comment type="subcellular location">
    <subcellularLocation>
        <location evidence="1">Cell surface</location>
    </subcellularLocation>
</comment>